<gene>
    <name evidence="2" type="primary">TP</name>
</gene>
<sequence length="739" mass="82028">MSTPHHQFESKSSTAIRRRLSSSVSSKQRPNIMTTTFASLTPMWAGVAGTLVNNNTQYEIAVTVHDGVYSTDFASVIIPVTPGDTVKNSKDIEAQVLNLIRKFSAEHLCKFLGAGITLALLKECPNLCTRLWLDMDIVPIVFNIKPFHTDSVTRPNIKHRISSTTGSYVPSGSETPTVYVEASHLDDPSHLSPNAAQKLPIPRTLDEQSDSAARKCLMYFGPNNNPRLSIGARNQVTVDAGGKIHLIDDLEEYRETVGAGTWNAVIKLADELREKKVKIGFFSSTPQGGGVALMRHALIRFLTALDVDVAWYVPNPSPQVFRTTKNNHNILQGVAAPDLRLTQEAKDAFDAWILKNGLRWTAEGGPLAPGGVDVVFIDDPQMPGLIPLIKKVRPEVPIVYRSHIEIRSDLVHVAGSPQEEVWKYLWNNIQLADLFISHPVSKFVPSDVPTEKLALLGAATDWLDGLNKDLDPWDSQFYMGEFRSPCAKEKMHELNWPARDYIVQVARFDPSKGIPNVVDSYYKFRNLLRTRSPDMDESEHPQLLICGHGAVDDPDASIIYDQIMALVNSDPYKEYAHDIVVMRLPPSDELLNAMMANSRIALQLSTREGFEVKVSEALHTGKPVIACRTGGIPLQIQHGKSGYLTTPGDNDAVAGHLYDLYTDEALYRKMSDFARTHVSDEVGTVGNAAAWLYLAVMYSRGEKIKPNGAWINDLLREETGEPYKEGETKLPRTKLDMQG</sequence>
<name>TREPH_PLEPU</name>
<evidence type="ECO:0000250" key="1">
    <source>
        <dbReference type="UniProtKB" id="O75003"/>
    </source>
</evidence>
<evidence type="ECO:0000250" key="2">
    <source>
        <dbReference type="UniProtKB" id="Q9UV63"/>
    </source>
</evidence>
<evidence type="ECO:0000256" key="3">
    <source>
        <dbReference type="SAM" id="MobiDB-lite"/>
    </source>
</evidence>
<evidence type="ECO:0000305" key="4"/>
<evidence type="ECO:0000312" key="5">
    <source>
        <dbReference type="EMBL" id="ABR88135.1"/>
    </source>
</evidence>
<proteinExistence type="evidence at transcript level"/>
<organism>
    <name type="scientific">Pleurotus pulmonarius</name>
    <name type="common">Indian oyster mushroom</name>
    <dbReference type="NCBI Taxonomy" id="28995"/>
    <lineage>
        <taxon>Eukaryota</taxon>
        <taxon>Fungi</taxon>
        <taxon>Dikarya</taxon>
        <taxon>Basidiomycota</taxon>
        <taxon>Agaricomycotina</taxon>
        <taxon>Agaricomycetes</taxon>
        <taxon>Agaricomycetidae</taxon>
        <taxon>Agaricales</taxon>
        <taxon>Pleurotineae</taxon>
        <taxon>Pleurotaceae</taxon>
        <taxon>Pleurotus</taxon>
    </lineage>
</organism>
<reference evidence="5" key="1">
    <citation type="submission" date="2007-06" db="EMBL/GenBank/DDBJ databases">
        <title>Isolation and functional characterization of trehalose phosphorylase gene in Pleurotus pulmonarius (Fr.).</title>
        <authorList>
            <person name="Tian Z.D."/>
            <person name="Xie C.H."/>
            <person name="Liu J."/>
        </authorList>
    </citation>
    <scope>NUCLEOTIDE SEQUENCE [MRNA]</scope>
</reference>
<feature type="propeptide" id="PRO_0000405295" evidence="1">
    <location>
        <begin position="1"/>
        <end position="26"/>
    </location>
</feature>
<feature type="chain" id="PRO_0000405296" description="Trehalose phosphorylase" evidence="1">
    <location>
        <begin position="27"/>
        <end position="739"/>
    </location>
</feature>
<feature type="region of interest" description="Disordered" evidence="3">
    <location>
        <begin position="1"/>
        <end position="28"/>
    </location>
</feature>
<dbReference type="EC" id="2.4.1.231"/>
<dbReference type="EMBL" id="EF645805">
    <property type="protein sequence ID" value="ABR88135.1"/>
    <property type="molecule type" value="mRNA"/>
</dbReference>
<dbReference type="SMR" id="A6YRN9"/>
<dbReference type="CAZy" id="GT4">
    <property type="family name" value="Glycosyltransferase Family 4"/>
</dbReference>
<dbReference type="BRENDA" id="2.4.1.231">
    <property type="organism ID" value="4914"/>
</dbReference>
<dbReference type="GO" id="GO:0033832">
    <property type="term" value="F:alpha,alpha-trehalose phosphorylase (configuration-retaining) activity"/>
    <property type="evidence" value="ECO:0000250"/>
    <property type="project" value="UniProtKB"/>
</dbReference>
<dbReference type="GO" id="GO:0051156">
    <property type="term" value="P:glucose 6-phosphate metabolic process"/>
    <property type="evidence" value="ECO:0000250"/>
    <property type="project" value="UniProtKB"/>
</dbReference>
<dbReference type="GO" id="GO:0006006">
    <property type="term" value="P:glucose metabolic process"/>
    <property type="evidence" value="ECO:0000250"/>
    <property type="project" value="UniProtKB"/>
</dbReference>
<dbReference type="GO" id="GO:0005991">
    <property type="term" value="P:trehalose metabolic process"/>
    <property type="evidence" value="ECO:0000250"/>
    <property type="project" value="UniProtKB"/>
</dbReference>
<dbReference type="CDD" id="cd03792">
    <property type="entry name" value="GT4_trehalose_phosphorylase"/>
    <property type="match status" value="1"/>
</dbReference>
<dbReference type="FunFam" id="3.40.50.2000:FF:000249">
    <property type="entry name" value="Trehalose phosphorylase"/>
    <property type="match status" value="1"/>
</dbReference>
<dbReference type="FunFam" id="3.40.50.2000:FF:000475">
    <property type="entry name" value="Trehalose phosphorylase"/>
    <property type="match status" value="1"/>
</dbReference>
<dbReference type="Gene3D" id="3.40.50.2000">
    <property type="entry name" value="Glycogen Phosphorylase B"/>
    <property type="match status" value="2"/>
</dbReference>
<dbReference type="InterPro" id="IPR001296">
    <property type="entry name" value="Glyco_trans_1"/>
</dbReference>
<dbReference type="InterPro" id="IPR052078">
    <property type="entry name" value="Trehalose_Metab_GTase"/>
</dbReference>
<dbReference type="InterPro" id="IPR049438">
    <property type="entry name" value="TreT_GT1"/>
</dbReference>
<dbReference type="PANTHER" id="PTHR47779">
    <property type="entry name" value="SYNTHASE (CCG-9), PUTATIVE (AFU_ORTHOLOGUE AFUA_3G12100)-RELATED"/>
    <property type="match status" value="1"/>
</dbReference>
<dbReference type="PANTHER" id="PTHR47779:SF1">
    <property type="entry name" value="SYNTHASE (CCG-9), PUTATIVE (AFU_ORTHOLOGUE AFUA_3G12100)-RELATED"/>
    <property type="match status" value="1"/>
</dbReference>
<dbReference type="Pfam" id="PF00534">
    <property type="entry name" value="Glycos_transf_1"/>
    <property type="match status" value="1"/>
</dbReference>
<dbReference type="Pfam" id="PF21269">
    <property type="entry name" value="TreT_GT1"/>
    <property type="match status" value="1"/>
</dbReference>
<dbReference type="SUPFAM" id="SSF53756">
    <property type="entry name" value="UDP-Glycosyltransferase/glycogen phosphorylase"/>
    <property type="match status" value="1"/>
</dbReference>
<comment type="function">
    <text evidence="1 2">Reversibly catalyzes the synthesis and degradation of trehalose from glucose and alpha-D-glucose 1-phosphate. The equilibrium lies in the direction of trehalose synthesis (By similarity).</text>
</comment>
<comment type="catalytic activity">
    <reaction evidence="2">
        <text>alpha,alpha-trehalose + phosphate = alpha-D-glucose + alpha-D-glucose 1-phosphate</text>
        <dbReference type="Rhea" id="RHEA:16257"/>
        <dbReference type="ChEBI" id="CHEBI:16551"/>
        <dbReference type="ChEBI" id="CHEBI:17925"/>
        <dbReference type="ChEBI" id="CHEBI:43474"/>
        <dbReference type="ChEBI" id="CHEBI:58601"/>
        <dbReference type="EC" id="2.4.1.231"/>
    </reaction>
</comment>
<comment type="subunit">
    <text evidence="1">Homodimer.</text>
</comment>
<comment type="similarity">
    <text evidence="4">Belongs to the glycosyltransferase group 1 family. Glycosyltransferase 4 subfamily.</text>
</comment>
<protein>
    <recommendedName>
        <fullName evidence="5">Trehalose phosphorylase</fullName>
        <ecNumber>2.4.1.231</ecNumber>
    </recommendedName>
    <alternativeName>
        <fullName evidence="1">Trehalose synthase</fullName>
        <shortName evidence="1">TSase</shortName>
    </alternativeName>
</protein>
<accession>A6YRN9</accession>
<keyword id="KW-0119">Carbohydrate metabolism</keyword>
<keyword id="KW-0313">Glucose metabolism</keyword>
<keyword id="KW-0328">Glycosyltransferase</keyword>
<keyword id="KW-0808">Transferase</keyword>